<organism>
    <name type="scientific">Lactobacillus delbrueckii subsp. bulgaricus (strain ATCC 11842 / DSM 20081 / BCRC 10696 / JCM 1002 / NBRC 13953 / NCIMB 11778 / NCTC 12712 / WDCM 00102 / Lb 14)</name>
    <dbReference type="NCBI Taxonomy" id="390333"/>
    <lineage>
        <taxon>Bacteria</taxon>
        <taxon>Bacillati</taxon>
        <taxon>Bacillota</taxon>
        <taxon>Bacilli</taxon>
        <taxon>Lactobacillales</taxon>
        <taxon>Lactobacillaceae</taxon>
        <taxon>Lactobacillus</taxon>
    </lineage>
</organism>
<accession>Q1G7W2</accession>
<comment type="catalytic activity">
    <reaction>
        <text>a 2'-deoxyribonucleoside 5'-triphosphate + [thioredoxin]-disulfide + H2O = a ribonucleoside 5'-triphosphate + [thioredoxin]-dithiol</text>
        <dbReference type="Rhea" id="RHEA:12701"/>
        <dbReference type="Rhea" id="RHEA-COMP:10698"/>
        <dbReference type="Rhea" id="RHEA-COMP:10700"/>
        <dbReference type="ChEBI" id="CHEBI:15377"/>
        <dbReference type="ChEBI" id="CHEBI:29950"/>
        <dbReference type="ChEBI" id="CHEBI:50058"/>
        <dbReference type="ChEBI" id="CHEBI:61557"/>
        <dbReference type="ChEBI" id="CHEBI:61560"/>
        <dbReference type="EC" id="1.17.4.2"/>
    </reaction>
</comment>
<comment type="cofactor">
    <cofactor evidence="1">
        <name>adenosylcob(III)alamin</name>
        <dbReference type="ChEBI" id="CHEBI:18408"/>
    </cofactor>
</comment>
<comment type="activity regulation">
    <text evidence="1">Allosterically regulated by ATP and dNTP.</text>
</comment>
<comment type="subunit">
    <text evidence="1">Monomer.</text>
</comment>
<comment type="similarity">
    <text evidence="2">Belongs to the class II ribonucleoside-triphosphate reductase family.</text>
</comment>
<protein>
    <recommendedName>
        <fullName>Adenosylcobalamin-dependent ribonucleoside-triphosphate reductase</fullName>
        <shortName>RTPR</shortName>
        <ecNumber>1.17.4.2</ecNumber>
    </recommendedName>
</protein>
<sequence>MSEGISLSAEFIDRVKASVKPHWGKLGWVTYKRTYARWLPEKGRSENWDETVKRVVEGNINLDPRLQDSPSLELKQSLTEEAERLYKLIYGLGATPSGRNLWISGTDYQRRTGDSLNNCWFVAIRPQKYGDSKIVPSYLGKQEKAVSMPFSFLFDELMKGGGVGFSVARSNISQIPRVDFAIDLQVVVDESSESYDASVKVGAVGKNELVQDADSIYYRLPDTREGWVLANALLIDLHFAQTNPDRKQKLILDLSDIRPYGAEIHGFGGTASGPMPLISMLLDINEVLNNKAGGRLTSVDAADICNLIGKAVVAGNVRRSAELALGSNDDQDFISMKQDQEKLMHHRWASNNSVAVDSAFSGYQPIAAGIRENGEPGIVNLDLSKNYGRIVDGYQAGIDGDVEGTNPCGEISLANGEPCNLFEVFPLIAEEQGWDLQEVFALAARYAKRVTFSPYDWEISREIIQKNRRIGISMSGIQDWLLTRLGNRVVTGFKDDFDPETHEAIKVPVYDKRAIKMVDQLYKAVVKADQDYSKTLGCNESIKHTTVKPSGTVAKLAGASEGMHFHYGAYLIQRIRFQNSDPLLPALKACGYRTEADIYTENTTCVEFPVKAVGADNPNFASAGTVSIAEQFATQAFLQTYWSDNAVSCTITFQDSEGDQVESLLRQYRFIIKSTSLLPYFGGSLQQAPKEPIDKETYEKRSQEITGNVEEVFSQLNSDVKDLELVDQTDCEGGACPIK</sequence>
<name>RTPR_LACDA</name>
<evidence type="ECO:0000250" key="1"/>
<evidence type="ECO:0000305" key="2"/>
<keyword id="KW-0021">Allosteric enzyme</keyword>
<keyword id="KW-0846">Cobalamin</keyword>
<keyword id="KW-0170">Cobalt</keyword>
<keyword id="KW-1015">Disulfide bond</keyword>
<keyword id="KW-0235">DNA replication</keyword>
<keyword id="KW-0560">Oxidoreductase</keyword>
<keyword id="KW-0676">Redox-active center</keyword>
<keyword id="KW-1185">Reference proteome</keyword>
<gene>
    <name type="primary">rtpR</name>
    <name type="ordered locus">Ldb0096</name>
</gene>
<dbReference type="EC" id="1.17.4.2"/>
<dbReference type="EMBL" id="CR954253">
    <property type="protein sequence ID" value="CAI96937.1"/>
    <property type="molecule type" value="Genomic_DNA"/>
</dbReference>
<dbReference type="SMR" id="Q1G7W2"/>
<dbReference type="STRING" id="390333.Ldb0096"/>
<dbReference type="KEGG" id="ldb:Ldb0096"/>
<dbReference type="PATRIC" id="fig|390333.13.peg.812"/>
<dbReference type="eggNOG" id="COG0209">
    <property type="taxonomic scope" value="Bacteria"/>
</dbReference>
<dbReference type="HOGENOM" id="CLU_002384_0_0_9"/>
<dbReference type="BioCyc" id="LDEL390333:LDB_RS00375-MONOMER"/>
<dbReference type="Proteomes" id="UP000001259">
    <property type="component" value="Chromosome"/>
</dbReference>
<dbReference type="GO" id="GO:0031419">
    <property type="term" value="F:cobalamin binding"/>
    <property type="evidence" value="ECO:0007669"/>
    <property type="project" value="UniProtKB-KW"/>
</dbReference>
<dbReference type="GO" id="GO:0000166">
    <property type="term" value="F:nucleotide binding"/>
    <property type="evidence" value="ECO:0007669"/>
    <property type="project" value="InterPro"/>
</dbReference>
<dbReference type="GO" id="GO:0004748">
    <property type="term" value="F:ribonucleoside-diphosphate reductase activity, thioredoxin disulfide as acceptor"/>
    <property type="evidence" value="ECO:0007669"/>
    <property type="project" value="InterPro"/>
</dbReference>
<dbReference type="GO" id="GO:0008998">
    <property type="term" value="F:ribonucleoside-triphosphate reductase (thioredoxin) activity"/>
    <property type="evidence" value="ECO:0007669"/>
    <property type="project" value="UniProtKB-EC"/>
</dbReference>
<dbReference type="GO" id="GO:0006260">
    <property type="term" value="P:DNA replication"/>
    <property type="evidence" value="ECO:0007669"/>
    <property type="project" value="UniProtKB-KW"/>
</dbReference>
<dbReference type="CDD" id="cd01676">
    <property type="entry name" value="RNR_II_monomer"/>
    <property type="match status" value="1"/>
</dbReference>
<dbReference type="Gene3D" id="3.20.70.20">
    <property type="match status" value="1"/>
</dbReference>
<dbReference type="Gene3D" id="3.30.1620.10">
    <property type="entry name" value="b-12 dependent (class ii) ribonucleotide reductase, Chain A, Domain 2"/>
    <property type="match status" value="1"/>
</dbReference>
<dbReference type="Gene3D" id="3.90.1390.10">
    <property type="entry name" value="b-12 dependent (class ii) ribonucleotide reductase, chain A, domain 3"/>
    <property type="match status" value="1"/>
</dbReference>
<dbReference type="InterPro" id="IPR050862">
    <property type="entry name" value="RdRp_reductase_class-2"/>
</dbReference>
<dbReference type="InterPro" id="IPR054158">
    <property type="entry name" value="RNR-II_ins_dom"/>
</dbReference>
<dbReference type="InterPro" id="IPR040763">
    <property type="entry name" value="RNR_alpha_hel"/>
</dbReference>
<dbReference type="InterPro" id="IPR013345">
    <property type="entry name" value="RTP_Rdtase_AdoCbl-dep"/>
</dbReference>
<dbReference type="NCBIfam" id="TIGR02505">
    <property type="entry name" value="RTPR"/>
    <property type="match status" value="1"/>
</dbReference>
<dbReference type="PANTHER" id="PTHR43371:SF1">
    <property type="entry name" value="RIBONUCLEOSIDE-DIPHOSPHATE REDUCTASE"/>
    <property type="match status" value="1"/>
</dbReference>
<dbReference type="PANTHER" id="PTHR43371">
    <property type="entry name" value="VITAMIN B12-DEPENDENT RIBONUCLEOTIDE REDUCTASE"/>
    <property type="match status" value="1"/>
</dbReference>
<dbReference type="Pfam" id="PF21995">
    <property type="entry name" value="RNR-II_ins_dom"/>
    <property type="match status" value="1"/>
</dbReference>
<dbReference type="Pfam" id="PF17975">
    <property type="entry name" value="RNR_Alpha"/>
    <property type="match status" value="1"/>
</dbReference>
<dbReference type="SUPFAM" id="SSF51998">
    <property type="entry name" value="PFL-like glycyl radical enzymes"/>
    <property type="match status" value="1"/>
</dbReference>
<reference key="1">
    <citation type="journal article" date="2006" name="Proc. Natl. Acad. Sci. U.S.A.">
        <title>The complete genome sequence of Lactobacillus bulgaricus reveals extensive and ongoing reductive evolution.</title>
        <authorList>
            <person name="van de Guchte M."/>
            <person name="Penaud S."/>
            <person name="Grimaldi C."/>
            <person name="Barbe V."/>
            <person name="Bryson K."/>
            <person name="Nicolas P."/>
            <person name="Robert C."/>
            <person name="Oztas S."/>
            <person name="Mangenot S."/>
            <person name="Couloux A."/>
            <person name="Loux V."/>
            <person name="Dervyn R."/>
            <person name="Bossy R."/>
            <person name="Bolotin A."/>
            <person name="Batto J.-M."/>
            <person name="Walunas T."/>
            <person name="Gibrat J.-F."/>
            <person name="Bessieres P."/>
            <person name="Weissenbach J."/>
            <person name="Ehrlich S.D."/>
            <person name="Maguin E."/>
        </authorList>
    </citation>
    <scope>NUCLEOTIDE SEQUENCE [LARGE SCALE GENOMIC DNA]</scope>
    <source>
        <strain>ATCC 11842 / DSM 20081 / BCRC 10696 / JCM 1002 / NBRC 13953 / NCIMB 11778 / NCTC 12712 / WDCM 00102 / Lb 14</strain>
    </source>
</reference>
<feature type="chain" id="PRO_0000326539" description="Adenosylcobalamin-dependent ribonucleoside-triphosphate reductase">
    <location>
        <begin position="1"/>
        <end position="739"/>
    </location>
</feature>
<feature type="region of interest" description="Effector region-1" evidence="1">
    <location>
        <begin position="147"/>
        <end position="158"/>
    </location>
</feature>
<feature type="region of interest" description="Effector region-2" evidence="1">
    <location>
        <begin position="168"/>
        <end position="313"/>
    </location>
</feature>
<feature type="region of interest" description="Adenosylcobalamin-binding-1" evidence="1">
    <location>
        <begin position="565"/>
        <end position="626"/>
    </location>
</feature>
<feature type="region of interest" description="Adenosylcobalamin-binding-2" evidence="1">
    <location>
        <begin position="685"/>
        <end position="724"/>
    </location>
</feature>
<feature type="active site" evidence="1">
    <location>
        <position position="408"/>
    </location>
</feature>
<feature type="active site" evidence="1">
    <location>
        <position position="410"/>
    </location>
</feature>
<feature type="disulfide bond" description="Redox-active" evidence="1">
    <location>
        <begin position="119"/>
        <end position="419"/>
    </location>
</feature>
<proteinExistence type="inferred from homology"/>